<name>UGTP_BACC7</name>
<sequence>MIKNPKVLILTAHYGNGHVQVAKTLEQTFRQKGIKDVIVCDLFGESHPVITDITKYLYLKSYTIGKELYRLFYYGVEKIYDKKIASWYANFGRKRLKLLLQAEKPDIVINTFPIIAVPELKKQTGISIPVYNVLTDFCVHKIWIHREVDRYFVATDHVKKVMVDIGVPAEQIVETGIPIRSSFELKINSDIIYNKYQLCKNKKILLIVAGAHGVLGSVKELCQSFMSVPDLQVVVVCGKNEALKQDLLGLQEKNPDALKVFGYVENIDELFRVTSCMITKPGGITLSEAAALQVPVILYKPVPGQENENAMYFERKGAAVVIRDDSEVFAKTEALLQDDMRLLQMKEAMKSIYRPEPADHIVDTILAENHVEPNHIPIKSPALAQSFT</sequence>
<gene>
    <name evidence="1" type="primary">ugtP</name>
    <name type="ordered locus">BCAH187_A0567</name>
</gene>
<comment type="function">
    <text evidence="1">Processive glucosyltransferase involved in the biosynthesis of both the bilayer- and non-bilayer-forming membrane glucolipids. Is able to successively transfer up to three glucosyl residues to diacylglycerol (DAG), thereby catalyzing the formation of beta-monoglucosyl-DAG (3-O-(beta-D-glucopyranosyl)-1,2-diacyl-sn-glycerol), beta-diglucosyl-DAG (3-O-(beta-D-glucopyranosyl-beta-(1-&gt;6)-D-glucopyranosyl)-1,2-diacyl-sn-glycerol) and beta-triglucosyl-DAG (3-O-(beta-D-glucopyranosyl-beta-(1-&gt;6)-D-glucopyranosyl-beta-(1-&gt;6)-D-glucopyranosyl)-1,2-diacyl-sn-glycerol). Beta-diglucosyl-DAG is the predominant glycolipid found in Bacillales and is also used as a membrane anchor for lipoteichoic acid (LTA).</text>
</comment>
<comment type="catalytic activity">
    <reaction>
        <text>a 1,2-diacyl-3-O-(beta-D-glucopyranosyl)-sn-glycerol + UDP-alpha-D-glucose = a 1,2-diacyl-3-O-(beta-D-Glc-(1-&gt;6)-beta-D-Glc)-sn-glycerol + UDP + H(+)</text>
        <dbReference type="Rhea" id="RHEA:39031"/>
        <dbReference type="ChEBI" id="CHEBI:15378"/>
        <dbReference type="ChEBI" id="CHEBI:58223"/>
        <dbReference type="ChEBI" id="CHEBI:58885"/>
        <dbReference type="ChEBI" id="CHEBI:75799"/>
        <dbReference type="ChEBI" id="CHEBI:76264"/>
        <dbReference type="EC" id="2.4.1.315"/>
    </reaction>
</comment>
<comment type="catalytic activity">
    <reaction>
        <text>a 1,2-diacyl-3-O-(beta-D-Glc-(1-&gt;6)-beta-D-Glc)-sn-glycerol + UDP-alpha-D-glucose = a 1,2-diacyl-3-O-(beta-D-Glc-(1-&gt;6)-beta-D-Glc-(1-&gt;6)-beta-D-Glc)-sn-glycerol + UDP + H(+)</text>
        <dbReference type="Rhea" id="RHEA:39027"/>
        <dbReference type="ChEBI" id="CHEBI:15378"/>
        <dbReference type="ChEBI" id="CHEBI:58223"/>
        <dbReference type="ChEBI" id="CHEBI:58885"/>
        <dbReference type="ChEBI" id="CHEBI:76264"/>
        <dbReference type="ChEBI" id="CHEBI:76265"/>
        <dbReference type="EC" id="2.4.1.315"/>
    </reaction>
</comment>
<comment type="catalytic activity">
    <reaction evidence="1">
        <text>a 1,2-diacyl-sn-glycerol + UDP-alpha-D-glucose = a 1,2-diacyl-3-O-(beta-D-glucopyranosyl)-sn-glycerol + UDP + H(+)</text>
        <dbReference type="Rhea" id="RHEA:17285"/>
        <dbReference type="ChEBI" id="CHEBI:15378"/>
        <dbReference type="ChEBI" id="CHEBI:17815"/>
        <dbReference type="ChEBI" id="CHEBI:58223"/>
        <dbReference type="ChEBI" id="CHEBI:58885"/>
        <dbReference type="ChEBI" id="CHEBI:75799"/>
    </reaction>
</comment>
<comment type="pathway">
    <text evidence="1">Glycolipid metabolism; diglucosyl-diacylglycerol biosynthesis.</text>
</comment>
<comment type="subcellular location">
    <subcellularLocation>
        <location evidence="1">Cell membrane</location>
    </subcellularLocation>
</comment>
<comment type="similarity">
    <text evidence="1">Belongs to the glycosyltransferase 28 family. UgtP subfamily.</text>
</comment>
<feature type="chain" id="PRO_1000140343" description="Processive diacylglycerol beta-glucosyltransferase">
    <location>
        <begin position="1"/>
        <end position="388"/>
    </location>
</feature>
<protein>
    <recommendedName>
        <fullName evidence="1">Processive diacylglycerol beta-glucosyltransferase</fullName>
        <ecNumber>2.4.1.315</ecNumber>
    </recommendedName>
    <alternativeName>
        <fullName evidence="1">Beta-diglucosyldiacylglycerol synthase</fullName>
        <shortName evidence="1">Beta-DGS</shortName>
        <shortName evidence="1">DGlcDAG synthase</shortName>
        <shortName evidence="1">Glc2-DAG synthase</shortName>
    </alternativeName>
    <alternativeName>
        <fullName evidence="1">Beta-gentiobiosyldiacylglycerol synthase</fullName>
    </alternativeName>
    <alternativeName>
        <fullName evidence="1">Beta-monoglucosyldiacylglycerol synthase</fullName>
        <shortName evidence="1">Beta-MGS</shortName>
        <shortName evidence="1">MGlcDAG synthase</shortName>
    </alternativeName>
    <alternativeName>
        <fullName evidence="1">Beta-triglucosyldiacylglycerol synthase</fullName>
        <shortName evidence="1">TGlcDAG synthase</shortName>
    </alternativeName>
    <alternativeName>
        <fullName>Diglucosyl diacylglycerol synthase (1,6-linking)</fullName>
    </alternativeName>
    <alternativeName>
        <fullName evidence="1">Glucosyl-beta-1,6-glucosyldiacylglycerol synthase</fullName>
    </alternativeName>
    <alternativeName>
        <fullName evidence="1">UDP glucosyltransferase</fullName>
    </alternativeName>
    <alternativeName>
        <fullName evidence="1">UDP-glucose:1,2-diacylglycerol-3-beta-D-glucosyltransferase</fullName>
    </alternativeName>
</protein>
<accession>B7HU46</accession>
<reference key="1">
    <citation type="submission" date="2008-10" db="EMBL/GenBank/DDBJ databases">
        <title>Genome sequence of Bacillus cereus AH187.</title>
        <authorList>
            <person name="Dodson R.J."/>
            <person name="Durkin A.S."/>
            <person name="Rosovitz M.J."/>
            <person name="Rasko D.A."/>
            <person name="Kolsto A.B."/>
            <person name="Okstad O.A."/>
            <person name="Ravel J."/>
            <person name="Sutton G."/>
        </authorList>
    </citation>
    <scope>NUCLEOTIDE SEQUENCE [LARGE SCALE GENOMIC DNA]</scope>
    <source>
        <strain>AH187</strain>
    </source>
</reference>
<proteinExistence type="inferred from homology"/>
<keyword id="KW-0119">Carbohydrate metabolism</keyword>
<keyword id="KW-1003">Cell membrane</keyword>
<keyword id="KW-0328">Glycosyltransferase</keyword>
<keyword id="KW-0444">Lipid biosynthesis</keyword>
<keyword id="KW-0443">Lipid metabolism</keyword>
<keyword id="KW-0472">Membrane</keyword>
<keyword id="KW-0808">Transferase</keyword>
<evidence type="ECO:0000255" key="1">
    <source>
        <dbReference type="HAMAP-Rule" id="MF_01280"/>
    </source>
</evidence>
<organism>
    <name type="scientific">Bacillus cereus (strain AH187)</name>
    <dbReference type="NCBI Taxonomy" id="405534"/>
    <lineage>
        <taxon>Bacteria</taxon>
        <taxon>Bacillati</taxon>
        <taxon>Bacillota</taxon>
        <taxon>Bacilli</taxon>
        <taxon>Bacillales</taxon>
        <taxon>Bacillaceae</taxon>
        <taxon>Bacillus</taxon>
        <taxon>Bacillus cereus group</taxon>
    </lineage>
</organism>
<dbReference type="EC" id="2.4.1.315"/>
<dbReference type="EMBL" id="CP001177">
    <property type="protein sequence ID" value="ACJ77560.1"/>
    <property type="molecule type" value="Genomic_DNA"/>
</dbReference>
<dbReference type="SMR" id="B7HU46"/>
<dbReference type="CAZy" id="GT28">
    <property type="family name" value="Glycosyltransferase Family 28"/>
</dbReference>
<dbReference type="KEGG" id="bcr:BCAH187_A0567"/>
<dbReference type="HOGENOM" id="CLU_028367_0_1_9"/>
<dbReference type="UniPathway" id="UPA00894"/>
<dbReference type="Proteomes" id="UP000002214">
    <property type="component" value="Chromosome"/>
</dbReference>
<dbReference type="GO" id="GO:0005886">
    <property type="term" value="C:plasma membrane"/>
    <property type="evidence" value="ECO:0007669"/>
    <property type="project" value="UniProtKB-SubCell"/>
</dbReference>
<dbReference type="GO" id="GO:0047228">
    <property type="term" value="F:1,2-diacylglycerol 3-glucosyltransferase activity"/>
    <property type="evidence" value="ECO:0007669"/>
    <property type="project" value="UniProtKB-UniRule"/>
</dbReference>
<dbReference type="GO" id="GO:0009246">
    <property type="term" value="P:enterobacterial common antigen biosynthetic process"/>
    <property type="evidence" value="ECO:0007669"/>
    <property type="project" value="UniProtKB-UniPathway"/>
</dbReference>
<dbReference type="GO" id="GO:0009247">
    <property type="term" value="P:glycolipid biosynthetic process"/>
    <property type="evidence" value="ECO:0007669"/>
    <property type="project" value="UniProtKB-UniRule"/>
</dbReference>
<dbReference type="GO" id="GO:0070395">
    <property type="term" value="P:lipoteichoic acid biosynthetic process"/>
    <property type="evidence" value="ECO:0007669"/>
    <property type="project" value="UniProtKB-UniRule"/>
</dbReference>
<dbReference type="CDD" id="cd17507">
    <property type="entry name" value="GT28_Beta-DGS-like"/>
    <property type="match status" value="1"/>
</dbReference>
<dbReference type="Gene3D" id="3.40.50.2000">
    <property type="entry name" value="Glycogen Phosphorylase B"/>
    <property type="match status" value="1"/>
</dbReference>
<dbReference type="HAMAP" id="MF_01280">
    <property type="entry name" value="Diacylglyc_glucosyltr"/>
    <property type="match status" value="1"/>
</dbReference>
<dbReference type="InterPro" id="IPR009695">
    <property type="entry name" value="Diacylglyc_glucosyltr_N"/>
</dbReference>
<dbReference type="InterPro" id="IPR007235">
    <property type="entry name" value="Glyco_trans_28_C"/>
</dbReference>
<dbReference type="InterPro" id="IPR050519">
    <property type="entry name" value="Glycosyltransf_28_UgtP"/>
</dbReference>
<dbReference type="InterPro" id="IPR023589">
    <property type="entry name" value="Pro_diacylglycrl_glcsylTrfase"/>
</dbReference>
<dbReference type="NCBIfam" id="NF010135">
    <property type="entry name" value="PRK13609.1"/>
    <property type="match status" value="1"/>
</dbReference>
<dbReference type="PANTHER" id="PTHR43025">
    <property type="entry name" value="MONOGALACTOSYLDIACYLGLYCEROL SYNTHASE"/>
    <property type="match status" value="1"/>
</dbReference>
<dbReference type="PANTHER" id="PTHR43025:SF3">
    <property type="entry name" value="MONOGALACTOSYLDIACYLGLYCEROL SYNTHASE 1, CHLOROPLASTIC"/>
    <property type="match status" value="1"/>
</dbReference>
<dbReference type="Pfam" id="PF04101">
    <property type="entry name" value="Glyco_tran_28_C"/>
    <property type="match status" value="1"/>
</dbReference>
<dbReference type="Pfam" id="PF06925">
    <property type="entry name" value="MGDG_synth"/>
    <property type="match status" value="1"/>
</dbReference>
<dbReference type="SUPFAM" id="SSF53756">
    <property type="entry name" value="UDP-Glycosyltransferase/glycogen phosphorylase"/>
    <property type="match status" value="1"/>
</dbReference>